<name>RUVA_CHRFK</name>
<accession>A0LXS4</accession>
<dbReference type="EMBL" id="CU207366">
    <property type="protein sequence ID" value="CAL65169.1"/>
    <property type="molecule type" value="Genomic_DNA"/>
</dbReference>
<dbReference type="RefSeq" id="WP_011708107.1">
    <property type="nucleotide sequence ID" value="NC_008571.1"/>
</dbReference>
<dbReference type="SMR" id="A0LXS4"/>
<dbReference type="STRING" id="411154.GFO_0181"/>
<dbReference type="KEGG" id="gfo:GFO_0181"/>
<dbReference type="eggNOG" id="COG0632">
    <property type="taxonomic scope" value="Bacteria"/>
</dbReference>
<dbReference type="HOGENOM" id="CLU_087936_3_0_10"/>
<dbReference type="OrthoDB" id="5293449at2"/>
<dbReference type="Proteomes" id="UP000000755">
    <property type="component" value="Chromosome"/>
</dbReference>
<dbReference type="GO" id="GO:0005737">
    <property type="term" value="C:cytoplasm"/>
    <property type="evidence" value="ECO:0007669"/>
    <property type="project" value="UniProtKB-SubCell"/>
</dbReference>
<dbReference type="GO" id="GO:0009379">
    <property type="term" value="C:Holliday junction helicase complex"/>
    <property type="evidence" value="ECO:0007669"/>
    <property type="project" value="InterPro"/>
</dbReference>
<dbReference type="GO" id="GO:0048476">
    <property type="term" value="C:Holliday junction resolvase complex"/>
    <property type="evidence" value="ECO:0007669"/>
    <property type="project" value="UniProtKB-UniRule"/>
</dbReference>
<dbReference type="GO" id="GO:0005524">
    <property type="term" value="F:ATP binding"/>
    <property type="evidence" value="ECO:0007669"/>
    <property type="project" value="InterPro"/>
</dbReference>
<dbReference type="GO" id="GO:0000400">
    <property type="term" value="F:four-way junction DNA binding"/>
    <property type="evidence" value="ECO:0007669"/>
    <property type="project" value="UniProtKB-UniRule"/>
</dbReference>
<dbReference type="GO" id="GO:0009378">
    <property type="term" value="F:four-way junction helicase activity"/>
    <property type="evidence" value="ECO:0007669"/>
    <property type="project" value="InterPro"/>
</dbReference>
<dbReference type="GO" id="GO:0006310">
    <property type="term" value="P:DNA recombination"/>
    <property type="evidence" value="ECO:0007669"/>
    <property type="project" value="UniProtKB-UniRule"/>
</dbReference>
<dbReference type="GO" id="GO:0006281">
    <property type="term" value="P:DNA repair"/>
    <property type="evidence" value="ECO:0007669"/>
    <property type="project" value="UniProtKB-UniRule"/>
</dbReference>
<dbReference type="CDD" id="cd14332">
    <property type="entry name" value="UBA_RuvA_C"/>
    <property type="match status" value="1"/>
</dbReference>
<dbReference type="Gene3D" id="1.10.150.20">
    <property type="entry name" value="5' to 3' exonuclease, C-terminal subdomain"/>
    <property type="match status" value="1"/>
</dbReference>
<dbReference type="Gene3D" id="1.10.8.10">
    <property type="entry name" value="DNA helicase RuvA subunit, C-terminal domain"/>
    <property type="match status" value="1"/>
</dbReference>
<dbReference type="Gene3D" id="2.40.50.140">
    <property type="entry name" value="Nucleic acid-binding proteins"/>
    <property type="match status" value="1"/>
</dbReference>
<dbReference type="HAMAP" id="MF_00031">
    <property type="entry name" value="DNA_HJ_migration_RuvA"/>
    <property type="match status" value="1"/>
</dbReference>
<dbReference type="InterPro" id="IPR013849">
    <property type="entry name" value="DNA_helicase_Holl-junc_RuvA_I"/>
</dbReference>
<dbReference type="InterPro" id="IPR003583">
    <property type="entry name" value="Hlx-hairpin-Hlx_DNA-bd_motif"/>
</dbReference>
<dbReference type="InterPro" id="IPR012340">
    <property type="entry name" value="NA-bd_OB-fold"/>
</dbReference>
<dbReference type="InterPro" id="IPR000085">
    <property type="entry name" value="RuvA"/>
</dbReference>
<dbReference type="InterPro" id="IPR010994">
    <property type="entry name" value="RuvA_2-like"/>
</dbReference>
<dbReference type="InterPro" id="IPR011114">
    <property type="entry name" value="RuvA_C"/>
</dbReference>
<dbReference type="InterPro" id="IPR036267">
    <property type="entry name" value="RuvA_C_sf"/>
</dbReference>
<dbReference type="NCBIfam" id="TIGR00084">
    <property type="entry name" value="ruvA"/>
    <property type="match status" value="1"/>
</dbReference>
<dbReference type="Pfam" id="PF14520">
    <property type="entry name" value="HHH_5"/>
    <property type="match status" value="1"/>
</dbReference>
<dbReference type="Pfam" id="PF07499">
    <property type="entry name" value="RuvA_C"/>
    <property type="match status" value="1"/>
</dbReference>
<dbReference type="Pfam" id="PF01330">
    <property type="entry name" value="RuvA_N"/>
    <property type="match status" value="1"/>
</dbReference>
<dbReference type="SMART" id="SM00278">
    <property type="entry name" value="HhH1"/>
    <property type="match status" value="2"/>
</dbReference>
<dbReference type="SUPFAM" id="SSF46929">
    <property type="entry name" value="DNA helicase RuvA subunit, C-terminal domain"/>
    <property type="match status" value="1"/>
</dbReference>
<dbReference type="SUPFAM" id="SSF50249">
    <property type="entry name" value="Nucleic acid-binding proteins"/>
    <property type="match status" value="1"/>
</dbReference>
<dbReference type="SUPFAM" id="SSF47781">
    <property type="entry name" value="RuvA domain 2-like"/>
    <property type="match status" value="1"/>
</dbReference>
<organism>
    <name type="scientific">Christiangramia forsetii (strain DSM 17595 / CGMCC 1.15422 / KT0803)</name>
    <name type="common">Gramella forsetii</name>
    <dbReference type="NCBI Taxonomy" id="411154"/>
    <lineage>
        <taxon>Bacteria</taxon>
        <taxon>Pseudomonadati</taxon>
        <taxon>Bacteroidota</taxon>
        <taxon>Flavobacteriia</taxon>
        <taxon>Flavobacteriales</taxon>
        <taxon>Flavobacteriaceae</taxon>
        <taxon>Christiangramia</taxon>
    </lineage>
</organism>
<feature type="chain" id="PRO_1000002456" description="Holliday junction branch migration complex subunit RuvA">
    <location>
        <begin position="1"/>
        <end position="193"/>
    </location>
</feature>
<feature type="region of interest" description="Domain I" evidence="1">
    <location>
        <begin position="1"/>
        <end position="63"/>
    </location>
</feature>
<feature type="region of interest" description="Domain II" evidence="1">
    <location>
        <begin position="64"/>
        <end position="142"/>
    </location>
</feature>
<feature type="region of interest" description="Flexible linker" evidence="1">
    <location>
        <begin position="143"/>
        <end position="145"/>
    </location>
</feature>
<feature type="region of interest" description="Domain III" evidence="1">
    <location>
        <begin position="145"/>
        <end position="193"/>
    </location>
</feature>
<protein>
    <recommendedName>
        <fullName evidence="1">Holliday junction branch migration complex subunit RuvA</fullName>
    </recommendedName>
</protein>
<comment type="function">
    <text evidence="1">The RuvA-RuvB-RuvC complex processes Holliday junction (HJ) DNA during genetic recombination and DNA repair, while the RuvA-RuvB complex plays an important role in the rescue of blocked DNA replication forks via replication fork reversal (RFR). RuvA specifically binds to HJ cruciform DNA, conferring on it an open structure. The RuvB hexamer acts as an ATP-dependent pump, pulling dsDNA into and through the RuvAB complex. HJ branch migration allows RuvC to scan DNA until it finds its consensus sequence, where it cleaves and resolves the cruciform DNA.</text>
</comment>
<comment type="subunit">
    <text evidence="1">Homotetramer. Forms an RuvA(8)-RuvB(12)-Holliday junction (HJ) complex. HJ DNA is sandwiched between 2 RuvA tetramers; dsDNA enters through RuvA and exits via RuvB. An RuvB hexamer assembles on each DNA strand where it exits the tetramer. Each RuvB hexamer is contacted by two RuvA subunits (via domain III) on 2 adjacent RuvB subunits; this complex drives branch migration. In the full resolvosome a probable DNA-RuvA(4)-RuvB(12)-RuvC(2) complex forms which resolves the HJ.</text>
</comment>
<comment type="subcellular location">
    <subcellularLocation>
        <location evidence="1">Cytoplasm</location>
    </subcellularLocation>
</comment>
<comment type="domain">
    <text evidence="1">Has three domains with a flexible linker between the domains II and III and assumes an 'L' shape. Domain III is highly mobile and contacts RuvB.</text>
</comment>
<comment type="similarity">
    <text evidence="1">Belongs to the RuvA family.</text>
</comment>
<gene>
    <name evidence="1" type="primary">ruvA</name>
    <name type="ordered locus">GFO_0181</name>
</gene>
<keyword id="KW-0963">Cytoplasm</keyword>
<keyword id="KW-0227">DNA damage</keyword>
<keyword id="KW-0233">DNA recombination</keyword>
<keyword id="KW-0234">DNA repair</keyword>
<keyword id="KW-0238">DNA-binding</keyword>
<sequence>MIHHLKGQLIEKNPTYVVIECNGIGYYINISLHTFSLIPDSEAVSVYTHLQVKEDSHTLYGFAEKSEREIFRLLISVSGVGTSTARMMLSSLQPREVTEAIASEDVATIQSVKGIGAKTAQRVILDLKDKVLKVLGDDEVFVSQSNTNKEEALSALEILGYNRRQAGKVVEKILKEDPESTVESIIKMALKKL</sequence>
<evidence type="ECO:0000255" key="1">
    <source>
        <dbReference type="HAMAP-Rule" id="MF_00031"/>
    </source>
</evidence>
<proteinExistence type="inferred from homology"/>
<reference key="1">
    <citation type="journal article" date="2006" name="Environ. Microbiol.">
        <title>Whole genome analysis of the marine Bacteroidetes'Gramella forsetii' reveals adaptations to degradation of polymeric organic matter.</title>
        <authorList>
            <person name="Bauer M."/>
            <person name="Kube M."/>
            <person name="Teeling H."/>
            <person name="Richter M."/>
            <person name="Lombardot T."/>
            <person name="Allers E."/>
            <person name="Wuerdemann C.A."/>
            <person name="Quast C."/>
            <person name="Kuhl H."/>
            <person name="Knaust F."/>
            <person name="Woebken D."/>
            <person name="Bischof K."/>
            <person name="Mussmann M."/>
            <person name="Choudhuri J.V."/>
            <person name="Meyer F."/>
            <person name="Reinhardt R."/>
            <person name="Amann R.I."/>
            <person name="Gloeckner F.O."/>
        </authorList>
    </citation>
    <scope>NUCLEOTIDE SEQUENCE [LARGE SCALE GENOMIC DNA]</scope>
    <source>
        <strain>DSM 17595 / CGMCC 1.15422 / KT0803</strain>
    </source>
</reference>